<dbReference type="EMBL" id="AF045552">
    <property type="protein sequence ID" value="AAC95127.1"/>
    <property type="molecule type" value="Genomic_DNA"/>
</dbReference>
<dbReference type="SMR" id="O52733"/>
<dbReference type="TCDB" id="2.A.1.1.41">
    <property type="family name" value="the major facilitator superfamily (mfs)"/>
</dbReference>
<dbReference type="GO" id="GO:0005886">
    <property type="term" value="C:plasma membrane"/>
    <property type="evidence" value="ECO:0007669"/>
    <property type="project" value="UniProtKB-SubCell"/>
</dbReference>
<dbReference type="GO" id="GO:0015293">
    <property type="term" value="F:symporter activity"/>
    <property type="evidence" value="ECO:0007669"/>
    <property type="project" value="UniProtKB-KW"/>
</dbReference>
<dbReference type="GO" id="GO:1904659">
    <property type="term" value="P:D-glucose transmembrane transport"/>
    <property type="evidence" value="ECO:0007669"/>
    <property type="project" value="TreeGrafter"/>
</dbReference>
<dbReference type="CDD" id="cd17359">
    <property type="entry name" value="MFS_XylE_like"/>
    <property type="match status" value="1"/>
</dbReference>
<dbReference type="FunFam" id="1.20.1250.20:FF:000218">
    <property type="entry name" value="facilitated trehalose transporter Tret1"/>
    <property type="match status" value="1"/>
</dbReference>
<dbReference type="Gene3D" id="1.20.1250.20">
    <property type="entry name" value="MFS general substrate transporter like domains"/>
    <property type="match status" value="1"/>
</dbReference>
<dbReference type="InterPro" id="IPR020846">
    <property type="entry name" value="MFS_dom"/>
</dbReference>
<dbReference type="InterPro" id="IPR005828">
    <property type="entry name" value="MFS_sugar_transport-like"/>
</dbReference>
<dbReference type="InterPro" id="IPR050820">
    <property type="entry name" value="MFS_Sugar_Transporter"/>
</dbReference>
<dbReference type="InterPro" id="IPR036259">
    <property type="entry name" value="MFS_trans_sf"/>
</dbReference>
<dbReference type="InterPro" id="IPR003663">
    <property type="entry name" value="Sugar/inositol_transpt"/>
</dbReference>
<dbReference type="InterPro" id="IPR005829">
    <property type="entry name" value="Sugar_transporter_CS"/>
</dbReference>
<dbReference type="InterPro" id="IPR047984">
    <property type="entry name" value="XylE-like"/>
</dbReference>
<dbReference type="NCBIfam" id="TIGR00879">
    <property type="entry name" value="SP"/>
    <property type="match status" value="1"/>
</dbReference>
<dbReference type="PANTHER" id="PTHR48023">
    <property type="entry name" value="D-XYLOSE-PROTON SYMPORTER-LIKE 2"/>
    <property type="match status" value="1"/>
</dbReference>
<dbReference type="PANTHER" id="PTHR48023:SF4">
    <property type="entry name" value="D-XYLOSE-PROTON SYMPORTER-LIKE 2"/>
    <property type="match status" value="1"/>
</dbReference>
<dbReference type="Pfam" id="PF00083">
    <property type="entry name" value="Sugar_tr"/>
    <property type="match status" value="1"/>
</dbReference>
<dbReference type="PRINTS" id="PR00171">
    <property type="entry name" value="SUGRTRNSPORT"/>
</dbReference>
<dbReference type="SUPFAM" id="SSF103473">
    <property type="entry name" value="MFS general substrate transporter"/>
    <property type="match status" value="1"/>
</dbReference>
<dbReference type="PROSITE" id="PS50850">
    <property type="entry name" value="MFS"/>
    <property type="match status" value="1"/>
</dbReference>
<dbReference type="PROSITE" id="PS00216">
    <property type="entry name" value="SUGAR_TRANSPORT_1"/>
    <property type="match status" value="1"/>
</dbReference>
<dbReference type="PROSITE" id="PS00217">
    <property type="entry name" value="SUGAR_TRANSPORT_2"/>
    <property type="match status" value="1"/>
</dbReference>
<reference key="1">
    <citation type="journal article" date="1998" name="Appl. Environ. Microbiol.">
        <title>Molecular cloning and functional expression in Lactobacillus plantarum 80 of xylT, encoding the D-xylose-H+ symporter of Lactobacillus brevis.</title>
        <authorList>
            <person name="Chaillou S."/>
            <person name="Bor Y.-C."/>
            <person name="Batt C.A."/>
            <person name="Postma P.W."/>
            <person name="Pouwels P.H."/>
        </authorList>
    </citation>
    <scope>NUCLEOTIDE SEQUENCE [GENOMIC DNA]</scope>
    <scope>FUNCTION</scope>
    <scope>ACTIVITY REGULATION</scope>
    <scope>BIOPHYSICOCHEMICAL PROPERTIES</scope>
    <scope>INDUCTION</scope>
</reference>
<keyword id="KW-1003">Cell membrane</keyword>
<keyword id="KW-0472">Membrane</keyword>
<keyword id="KW-0762">Sugar transport</keyword>
<keyword id="KW-0769">Symport</keyword>
<keyword id="KW-0812">Transmembrane</keyword>
<keyword id="KW-1133">Transmembrane helix</keyword>
<keyword id="KW-0813">Transport</keyword>
<comment type="function">
    <text evidence="3">Uptake of D-xylose across the boundary membrane with the concomitant transport of protons into the cell (symport system). Transport is driven by the proton motive force generated by either malolactic fermentation or by the metabolism of D-glucose.</text>
</comment>
<comment type="activity regulation">
    <text evidence="3">Transport is inhibited by 6-deoxy-D-glucose.</text>
</comment>
<comment type="biophysicochemical properties">
    <kinetics>
        <KM evidence="3">215 uM for D-xylose</KM>
        <Vmax evidence="3">35.0 nmol/min/mg enzyme</Vmax>
    </kinetics>
</comment>
<comment type="subcellular location">
    <subcellularLocation>
        <location evidence="5">Cell membrane</location>
        <topology evidence="2">Multi-pass membrane protein</topology>
    </subcellularLocation>
</comment>
<comment type="induction">
    <text evidence="3">By D-xylose.</text>
</comment>
<comment type="similarity">
    <text evidence="5">Belongs to the major facilitator superfamily. Sugar transporter (TC 2.A.1.1) family.</text>
</comment>
<accession>O52733</accession>
<proteinExistence type="evidence at protein level"/>
<gene>
    <name evidence="4" type="primary">xylT</name>
</gene>
<protein>
    <recommendedName>
        <fullName evidence="4">D-xylose transporter</fullName>
    </recommendedName>
    <alternativeName>
        <fullName evidence="4">D-xylose-proton symporter</fullName>
    </alternativeName>
</protein>
<feature type="chain" id="PRO_0000050296" description="D-xylose transporter">
    <location>
        <begin position="1"/>
        <end position="457"/>
    </location>
</feature>
<feature type="transmembrane region" description="Helical" evidence="2">
    <location>
        <begin position="14"/>
        <end position="34"/>
    </location>
</feature>
<feature type="transmembrane region" description="Helical" evidence="2">
    <location>
        <begin position="46"/>
        <end position="66"/>
    </location>
</feature>
<feature type="transmembrane region" description="Helical" evidence="2">
    <location>
        <begin position="81"/>
        <end position="101"/>
    </location>
</feature>
<feature type="transmembrane region" description="Helical" evidence="2">
    <location>
        <begin position="104"/>
        <end position="124"/>
    </location>
</feature>
<feature type="transmembrane region" description="Helical" evidence="2">
    <location>
        <begin position="131"/>
        <end position="151"/>
    </location>
</feature>
<feature type="transmembrane region" description="Helical" evidence="2">
    <location>
        <begin position="164"/>
        <end position="184"/>
    </location>
</feature>
<feature type="transmembrane region" description="Helical" evidence="2">
    <location>
        <begin position="244"/>
        <end position="264"/>
    </location>
</feature>
<feature type="transmembrane region" description="Helical" evidence="2">
    <location>
        <begin position="281"/>
        <end position="301"/>
    </location>
</feature>
<feature type="transmembrane region" description="Helical" evidence="2">
    <location>
        <begin position="309"/>
        <end position="329"/>
    </location>
</feature>
<feature type="transmembrane region" description="Helical" evidence="2">
    <location>
        <begin position="338"/>
        <end position="358"/>
    </location>
</feature>
<feature type="transmembrane region" description="Helical" evidence="2">
    <location>
        <begin position="380"/>
        <end position="400"/>
    </location>
</feature>
<feature type="transmembrane region" description="Helical" evidence="2">
    <location>
        <begin position="402"/>
        <end position="422"/>
    </location>
</feature>
<feature type="binding site" evidence="1">
    <location>
        <position position="138"/>
    </location>
    <ligand>
        <name>beta-D-xylose</name>
        <dbReference type="ChEBI" id="CHEBI:28161"/>
    </ligand>
</feature>
<feature type="binding site" evidence="1">
    <location>
        <begin position="254"/>
        <end position="255"/>
    </location>
    <ligand>
        <name>beta-D-xylose</name>
        <dbReference type="ChEBI" id="CHEBI:28161"/>
    </ligand>
</feature>
<feature type="binding site" evidence="1">
    <location>
        <position position="260"/>
    </location>
    <ligand>
        <name>beta-D-xylose</name>
        <dbReference type="ChEBI" id="CHEBI:28161"/>
    </ligand>
</feature>
<feature type="binding site" evidence="1">
    <location>
        <position position="362"/>
    </location>
    <ligand>
        <name>beta-D-xylose</name>
        <dbReference type="ChEBI" id="CHEBI:28161"/>
    </ligand>
</feature>
<feature type="binding site" evidence="1">
    <location>
        <position position="385"/>
    </location>
    <ligand>
        <name>beta-D-xylose</name>
        <dbReference type="ChEBI" id="CHEBI:28161"/>
    </ligand>
</feature>
<evidence type="ECO:0000250" key="1">
    <source>
        <dbReference type="UniProtKB" id="P0AGF4"/>
    </source>
</evidence>
<evidence type="ECO:0000255" key="2"/>
<evidence type="ECO:0000269" key="3">
    <source>
    </source>
</evidence>
<evidence type="ECO:0000303" key="4">
    <source>
    </source>
</evidence>
<evidence type="ECO:0000305" key="5"/>
<sequence length="457" mass="49199">MRKVSTGFVYFFGALGGLLFGYDTGVISGAILFIQKQMNLGSWQQGWVVSAVLLGAILGAAIIGPSSDRFGRRKLLLLSAIIFFVGALGSAFSPEFWTLIISRIILGMAVGAASALIPTYLAELAPSDKRGTVSSLFQLMVMTGILLAYITNYSFSGFYTGWRWMLGFAAIPAALLFLGGLILPESPRFLVKSGHLDEARHVLDTMNKHDQVAVNKEINDIQESAKIVSGGWSELFGKMVRPSLIIGIGLAIFQQVMGCNTVLYYAPTIFTDVGFGVSAALLAHIGIGIFNVIVTAIAVAIMDKIDRKKIVNIGAVGMGISLFVMSIGMKFSGGSQTAAIISVIALTVYIAFFSATWGPVMWVMIGEVFPLNIRGLGNSFASVINWTANMIVSLTFPSLLDFFGTGSLFIGYGILCFASIWFVQKKVFETRNRSLEDIEATLRAKTGEDAAELSTTK</sequence>
<organism>
    <name type="scientific">Levilactobacillus brevis</name>
    <name type="common">Lactobacillus brevis</name>
    <dbReference type="NCBI Taxonomy" id="1580"/>
    <lineage>
        <taxon>Bacteria</taxon>
        <taxon>Bacillati</taxon>
        <taxon>Bacillota</taxon>
        <taxon>Bacilli</taxon>
        <taxon>Lactobacillales</taxon>
        <taxon>Lactobacillaceae</taxon>
        <taxon>Levilactobacillus</taxon>
    </lineage>
</organism>
<name>XYLT_LEVBR</name>